<keyword id="KW-0143">Chaperone</keyword>
<keyword id="KW-0963">Cytoplasm</keyword>
<keyword id="KW-0235">DNA replication</keyword>
<keyword id="KW-0479">Metal-binding</keyword>
<keyword id="KW-0677">Repeat</keyword>
<keyword id="KW-0346">Stress response</keyword>
<keyword id="KW-0862">Zinc</keyword>
<keyword id="KW-0863">Zinc-finger</keyword>
<proteinExistence type="inferred from homology"/>
<protein>
    <recommendedName>
        <fullName evidence="1">Chaperone protein DnaJ</fullName>
    </recommendedName>
</protein>
<accession>Q45552</accession>
<name>DNAJ_GEOSE</name>
<gene>
    <name evidence="1" type="primary">dnaJ</name>
</gene>
<evidence type="ECO:0000255" key="1">
    <source>
        <dbReference type="HAMAP-Rule" id="MF_01152"/>
    </source>
</evidence>
<comment type="function">
    <text evidence="1">Participates actively in the response to hyperosmotic and heat shock by preventing the aggregation of stress-denatured proteins and by disaggregating proteins, also in an autonomous, DnaK-independent fashion. Unfolded proteins bind initially to DnaJ; upon interaction with the DnaJ-bound protein, DnaK hydrolyzes its bound ATP, resulting in the formation of a stable complex. GrpE releases ADP from DnaK; ATP binding to DnaK triggers the release of the substrate protein, thus completing the reaction cycle. Several rounds of ATP-dependent interactions between DnaJ, DnaK and GrpE are required for fully efficient folding. Also involved, together with DnaK and GrpE, in the DNA replication of plasmids through activation of initiation proteins.</text>
</comment>
<comment type="cofactor">
    <cofactor evidence="1">
        <name>Zn(2+)</name>
        <dbReference type="ChEBI" id="CHEBI:29105"/>
    </cofactor>
    <text evidence="1">Binds 2 Zn(2+) ions per monomer.</text>
</comment>
<comment type="subunit">
    <text evidence="1">Homodimer.</text>
</comment>
<comment type="subcellular location">
    <subcellularLocation>
        <location evidence="1">Cytoplasm</location>
    </subcellularLocation>
</comment>
<comment type="domain">
    <text evidence="1">The J domain is necessary and sufficient to stimulate DnaK ATPase activity. Zinc center 1 plays an important role in the autonomous, DnaK-independent chaperone activity of DnaJ. Zinc center 2 is essential for interaction with DnaK and for DnaJ activity.</text>
</comment>
<comment type="similarity">
    <text evidence="1">Belongs to the DnaJ family.</text>
</comment>
<dbReference type="EMBL" id="X90709">
    <property type="protein sequence ID" value="CAA62240.1"/>
    <property type="molecule type" value="Genomic_DNA"/>
</dbReference>
<dbReference type="PIR" id="JC4739">
    <property type="entry name" value="JC4739"/>
</dbReference>
<dbReference type="SMR" id="Q45552"/>
<dbReference type="GO" id="GO:0005737">
    <property type="term" value="C:cytoplasm"/>
    <property type="evidence" value="ECO:0007669"/>
    <property type="project" value="UniProtKB-SubCell"/>
</dbReference>
<dbReference type="GO" id="GO:0005524">
    <property type="term" value="F:ATP binding"/>
    <property type="evidence" value="ECO:0007669"/>
    <property type="project" value="InterPro"/>
</dbReference>
<dbReference type="GO" id="GO:0031072">
    <property type="term" value="F:heat shock protein binding"/>
    <property type="evidence" value="ECO:0007669"/>
    <property type="project" value="InterPro"/>
</dbReference>
<dbReference type="GO" id="GO:0051082">
    <property type="term" value="F:unfolded protein binding"/>
    <property type="evidence" value="ECO:0007669"/>
    <property type="project" value="UniProtKB-UniRule"/>
</dbReference>
<dbReference type="GO" id="GO:0008270">
    <property type="term" value="F:zinc ion binding"/>
    <property type="evidence" value="ECO:0007669"/>
    <property type="project" value="UniProtKB-UniRule"/>
</dbReference>
<dbReference type="GO" id="GO:0051085">
    <property type="term" value="P:chaperone cofactor-dependent protein refolding"/>
    <property type="evidence" value="ECO:0007669"/>
    <property type="project" value="TreeGrafter"/>
</dbReference>
<dbReference type="GO" id="GO:0006260">
    <property type="term" value="P:DNA replication"/>
    <property type="evidence" value="ECO:0007669"/>
    <property type="project" value="UniProtKB-KW"/>
</dbReference>
<dbReference type="GO" id="GO:0042026">
    <property type="term" value="P:protein refolding"/>
    <property type="evidence" value="ECO:0007669"/>
    <property type="project" value="TreeGrafter"/>
</dbReference>
<dbReference type="GO" id="GO:0009408">
    <property type="term" value="P:response to heat"/>
    <property type="evidence" value="ECO:0007669"/>
    <property type="project" value="InterPro"/>
</dbReference>
<dbReference type="CDD" id="cd06257">
    <property type="entry name" value="DnaJ"/>
    <property type="match status" value="1"/>
</dbReference>
<dbReference type="CDD" id="cd10747">
    <property type="entry name" value="DnaJ_C"/>
    <property type="match status" value="1"/>
</dbReference>
<dbReference type="CDD" id="cd10719">
    <property type="entry name" value="DnaJ_zf"/>
    <property type="match status" value="1"/>
</dbReference>
<dbReference type="FunFam" id="1.10.287.110:FF:000031">
    <property type="entry name" value="Molecular chaperone DnaJ"/>
    <property type="match status" value="1"/>
</dbReference>
<dbReference type="FunFam" id="2.10.230.10:FF:000002">
    <property type="entry name" value="Molecular chaperone DnaJ"/>
    <property type="match status" value="1"/>
</dbReference>
<dbReference type="Gene3D" id="1.10.287.110">
    <property type="entry name" value="DnaJ domain"/>
    <property type="match status" value="1"/>
</dbReference>
<dbReference type="Gene3D" id="2.10.230.10">
    <property type="entry name" value="Heat shock protein DnaJ, cysteine-rich domain"/>
    <property type="match status" value="1"/>
</dbReference>
<dbReference type="Gene3D" id="2.60.260.20">
    <property type="entry name" value="Urease metallochaperone UreE, N-terminal domain"/>
    <property type="match status" value="2"/>
</dbReference>
<dbReference type="HAMAP" id="MF_01152">
    <property type="entry name" value="DnaJ"/>
    <property type="match status" value="1"/>
</dbReference>
<dbReference type="InterPro" id="IPR012724">
    <property type="entry name" value="DnaJ"/>
</dbReference>
<dbReference type="InterPro" id="IPR002939">
    <property type="entry name" value="DnaJ_C"/>
</dbReference>
<dbReference type="InterPro" id="IPR001623">
    <property type="entry name" value="DnaJ_domain"/>
</dbReference>
<dbReference type="InterPro" id="IPR018253">
    <property type="entry name" value="DnaJ_domain_CS"/>
</dbReference>
<dbReference type="InterPro" id="IPR008971">
    <property type="entry name" value="HSP40/DnaJ_pept-bd"/>
</dbReference>
<dbReference type="InterPro" id="IPR001305">
    <property type="entry name" value="HSP_DnaJ_Cys-rich_dom"/>
</dbReference>
<dbReference type="InterPro" id="IPR036410">
    <property type="entry name" value="HSP_DnaJ_Cys-rich_dom_sf"/>
</dbReference>
<dbReference type="InterPro" id="IPR036869">
    <property type="entry name" value="J_dom_sf"/>
</dbReference>
<dbReference type="NCBIfam" id="TIGR02349">
    <property type="entry name" value="DnaJ_bact"/>
    <property type="match status" value="1"/>
</dbReference>
<dbReference type="NCBIfam" id="NF008035">
    <property type="entry name" value="PRK10767.1"/>
    <property type="match status" value="1"/>
</dbReference>
<dbReference type="NCBIfam" id="NF010873">
    <property type="entry name" value="PRK14280.1"/>
    <property type="match status" value="1"/>
</dbReference>
<dbReference type="PANTHER" id="PTHR43096:SF48">
    <property type="entry name" value="CHAPERONE PROTEIN DNAJ"/>
    <property type="match status" value="1"/>
</dbReference>
<dbReference type="PANTHER" id="PTHR43096">
    <property type="entry name" value="DNAJ HOMOLOG 1, MITOCHONDRIAL-RELATED"/>
    <property type="match status" value="1"/>
</dbReference>
<dbReference type="Pfam" id="PF00226">
    <property type="entry name" value="DnaJ"/>
    <property type="match status" value="1"/>
</dbReference>
<dbReference type="Pfam" id="PF01556">
    <property type="entry name" value="DnaJ_C"/>
    <property type="match status" value="1"/>
</dbReference>
<dbReference type="Pfam" id="PF00684">
    <property type="entry name" value="DnaJ_CXXCXGXG"/>
    <property type="match status" value="1"/>
</dbReference>
<dbReference type="PRINTS" id="PR00625">
    <property type="entry name" value="JDOMAIN"/>
</dbReference>
<dbReference type="SMART" id="SM00271">
    <property type="entry name" value="DnaJ"/>
    <property type="match status" value="1"/>
</dbReference>
<dbReference type="SUPFAM" id="SSF46565">
    <property type="entry name" value="Chaperone J-domain"/>
    <property type="match status" value="1"/>
</dbReference>
<dbReference type="SUPFAM" id="SSF57938">
    <property type="entry name" value="DnaJ/Hsp40 cysteine-rich domain"/>
    <property type="match status" value="1"/>
</dbReference>
<dbReference type="SUPFAM" id="SSF49493">
    <property type="entry name" value="HSP40/DnaJ peptide-binding domain"/>
    <property type="match status" value="2"/>
</dbReference>
<dbReference type="PROSITE" id="PS00636">
    <property type="entry name" value="DNAJ_1"/>
    <property type="match status" value="1"/>
</dbReference>
<dbReference type="PROSITE" id="PS50076">
    <property type="entry name" value="DNAJ_2"/>
    <property type="match status" value="1"/>
</dbReference>
<dbReference type="PROSITE" id="PS51188">
    <property type="entry name" value="ZF_CR"/>
    <property type="match status" value="1"/>
</dbReference>
<sequence>MAKRDYYEILGVSKNATKEEIKKAYRKLSKKYHPDVNKEPDAAEKFKEIKEAYEVLSDDQKRAHYDQFGQADPNQGFGGFRSDDFDLGGFSGFGGFEDIFNTFFGGGRRRNPNAPRAGADLQYTMTLTFEEAAFGKETDIEIPSEETCNTCHGTGAKPGTKPETCPHCHGAGQISTEQSTPFGRIVNRRTCPYCGGTGQYIKEKCTTCGGTGRVKRRKKIHVKIPAGIDDGQQLRVAGQGERGLTVGRREIYILSFMWSRMSFLNVTAMIFIAKCRLRLRKLRLGMKSKSRPFTGKLKLKIPAGTQTGTRLRLKGKGVPNVRGYGYGDQHVIVRVVTPTKLTEKQKQLLREFDQLGGSSMHHEPHDRFFDKVKKAFKPES</sequence>
<feature type="chain" id="PRO_0000070726" description="Chaperone protein DnaJ">
    <location>
        <begin position="1"/>
        <end position="380"/>
    </location>
</feature>
<feature type="domain" description="J" evidence="1">
    <location>
        <begin position="5"/>
        <end position="69"/>
    </location>
</feature>
<feature type="repeat" description="CXXCXGXG motif">
    <location>
        <begin position="148"/>
        <end position="155"/>
    </location>
</feature>
<feature type="repeat" description="CXXCXGXG motif">
    <location>
        <begin position="165"/>
        <end position="172"/>
    </location>
</feature>
<feature type="repeat" description="CXXCXGXG motif">
    <location>
        <begin position="191"/>
        <end position="198"/>
    </location>
</feature>
<feature type="repeat" description="CXXCXGXG motif">
    <location>
        <begin position="205"/>
        <end position="212"/>
    </location>
</feature>
<feature type="zinc finger region" description="CR-type" evidence="1">
    <location>
        <begin position="135"/>
        <end position="217"/>
    </location>
</feature>
<feature type="binding site" evidence="1">
    <location>
        <position position="148"/>
    </location>
    <ligand>
        <name>Zn(2+)</name>
        <dbReference type="ChEBI" id="CHEBI:29105"/>
        <label>1</label>
    </ligand>
</feature>
<feature type="binding site" evidence="1">
    <location>
        <position position="151"/>
    </location>
    <ligand>
        <name>Zn(2+)</name>
        <dbReference type="ChEBI" id="CHEBI:29105"/>
        <label>1</label>
    </ligand>
</feature>
<feature type="binding site" evidence="1">
    <location>
        <position position="165"/>
    </location>
    <ligand>
        <name>Zn(2+)</name>
        <dbReference type="ChEBI" id="CHEBI:29105"/>
        <label>2</label>
    </ligand>
</feature>
<feature type="binding site" evidence="1">
    <location>
        <position position="168"/>
    </location>
    <ligand>
        <name>Zn(2+)</name>
        <dbReference type="ChEBI" id="CHEBI:29105"/>
        <label>2</label>
    </ligand>
</feature>
<feature type="binding site" evidence="1">
    <location>
        <position position="191"/>
    </location>
    <ligand>
        <name>Zn(2+)</name>
        <dbReference type="ChEBI" id="CHEBI:29105"/>
        <label>2</label>
    </ligand>
</feature>
<feature type="binding site" evidence="1">
    <location>
        <position position="194"/>
    </location>
    <ligand>
        <name>Zn(2+)</name>
        <dbReference type="ChEBI" id="CHEBI:29105"/>
        <label>2</label>
    </ligand>
</feature>
<feature type="binding site" evidence="1">
    <location>
        <position position="205"/>
    </location>
    <ligand>
        <name>Zn(2+)</name>
        <dbReference type="ChEBI" id="CHEBI:29105"/>
        <label>1</label>
    </ligand>
</feature>
<feature type="binding site" evidence="1">
    <location>
        <position position="208"/>
    </location>
    <ligand>
        <name>Zn(2+)</name>
        <dbReference type="ChEBI" id="CHEBI:29105"/>
        <label>1</label>
    </ligand>
</feature>
<organism>
    <name type="scientific">Geobacillus stearothermophilus</name>
    <name type="common">Bacillus stearothermophilus</name>
    <dbReference type="NCBI Taxonomy" id="1422"/>
    <lineage>
        <taxon>Bacteria</taxon>
        <taxon>Bacillati</taxon>
        <taxon>Bacillota</taxon>
        <taxon>Bacilli</taxon>
        <taxon>Bacillales</taxon>
        <taxon>Anoxybacillaceae</taxon>
        <taxon>Geobacillus</taxon>
    </lineage>
</organism>
<reference key="1">
    <citation type="journal article" date="1996" name="Gene">
        <title>Cloning and sequencing of the dnaK operon of Bacillus stearothermophilus.</title>
        <authorList>
            <person name="Herbort M."/>
            <person name="Schoen U."/>
            <person name="Lang J."/>
            <person name="Schumann W."/>
        </authorList>
    </citation>
    <scope>NUCLEOTIDE SEQUENCE [GENOMIC DNA]</scope>
    <source>
        <strain>NUB36</strain>
    </source>
</reference>